<gene>
    <name evidence="3" type="primary">capB</name>
    <name evidence="6" type="ORF">CRX42_01180</name>
</gene>
<dbReference type="EC" id="3.5.2.-" evidence="5"/>
<dbReference type="EMBL" id="PDLL01000005">
    <property type="protein sequence ID" value="PYY72394.1"/>
    <property type="molecule type" value="Genomic_DNA"/>
</dbReference>
<dbReference type="RefSeq" id="WP_024075427.1">
    <property type="nucleotide sequence ID" value="NZ_PDLL01000005.1"/>
</dbReference>
<dbReference type="PDB" id="6YRA">
    <property type="method" value="X-ray"/>
    <property type="resolution" value="4.00 A"/>
    <property type="chains" value="B/D=1-581"/>
</dbReference>
<dbReference type="PDBsum" id="6YRA"/>
<dbReference type="SMR" id="A0A2W0FH34"/>
<dbReference type="OrthoDB" id="5288472at2"/>
<dbReference type="Proteomes" id="UP000247437">
    <property type="component" value="Unassembled WGS sequence"/>
</dbReference>
<dbReference type="GO" id="GO:0005829">
    <property type="term" value="C:cytosol"/>
    <property type="evidence" value="ECO:0007669"/>
    <property type="project" value="TreeGrafter"/>
</dbReference>
<dbReference type="GO" id="GO:0017168">
    <property type="term" value="F:5-oxoprolinase (ATP-hydrolyzing) activity"/>
    <property type="evidence" value="ECO:0007669"/>
    <property type="project" value="TreeGrafter"/>
</dbReference>
<dbReference type="GO" id="GO:0046872">
    <property type="term" value="F:metal ion binding"/>
    <property type="evidence" value="ECO:0007669"/>
    <property type="project" value="UniProtKB-KW"/>
</dbReference>
<dbReference type="GO" id="GO:0006749">
    <property type="term" value="P:glutathione metabolic process"/>
    <property type="evidence" value="ECO:0007669"/>
    <property type="project" value="TreeGrafter"/>
</dbReference>
<dbReference type="InterPro" id="IPR003692">
    <property type="entry name" value="Hydantoinase_B"/>
</dbReference>
<dbReference type="InterPro" id="IPR045079">
    <property type="entry name" value="Oxoprolinase-like"/>
</dbReference>
<dbReference type="PANTHER" id="PTHR11365">
    <property type="entry name" value="5-OXOPROLINASE RELATED"/>
    <property type="match status" value="1"/>
</dbReference>
<dbReference type="PANTHER" id="PTHR11365:SF23">
    <property type="entry name" value="HYPOTHETICAL 5-OXOPROLINASE (EUROFUNG)-RELATED"/>
    <property type="match status" value="1"/>
</dbReference>
<dbReference type="Pfam" id="PF02538">
    <property type="entry name" value="Hydantoinase_B"/>
    <property type="match status" value="1"/>
</dbReference>
<evidence type="ECO:0000269" key="1">
    <source>
    </source>
</evidence>
<evidence type="ECO:0000269" key="2">
    <source>
    </source>
</evidence>
<evidence type="ECO:0000303" key="3">
    <source>
    </source>
</evidence>
<evidence type="ECO:0000305" key="4"/>
<evidence type="ECO:0000305" key="5">
    <source>
    </source>
</evidence>
<evidence type="ECO:0000312" key="6">
    <source>
        <dbReference type="EMBL" id="PYY72394.1"/>
    </source>
</evidence>
<evidence type="ECO:0007744" key="7">
    <source>
        <dbReference type="PDB" id="6YRA"/>
    </source>
</evidence>
<feature type="chain" id="PRO_0000458042" description="Caprolactamase subunit beta">
    <location>
        <begin position="1"/>
        <end position="581"/>
    </location>
</feature>
<feature type="binding site" evidence="2 7">
    <location>
        <position position="41"/>
    </location>
    <ligand>
        <name>Zn(2+)</name>
        <dbReference type="ChEBI" id="CHEBI:29105"/>
    </ligand>
</feature>
<feature type="binding site" evidence="2 7">
    <location>
        <position position="99"/>
    </location>
    <ligand>
        <name>Zn(2+)</name>
        <dbReference type="ChEBI" id="CHEBI:29105"/>
    </ligand>
</feature>
<feature type="binding site" evidence="2 7">
    <location>
        <position position="102"/>
    </location>
    <ligand>
        <name>Zn(2+)</name>
        <dbReference type="ChEBI" id="CHEBI:29105"/>
    </ligand>
</feature>
<feature type="binding site" evidence="2 7">
    <location>
        <position position="124"/>
    </location>
    <ligand>
        <name>Zn(2+)</name>
        <dbReference type="ChEBI" id="CHEBI:29105"/>
    </ligand>
</feature>
<feature type="mutagenesis site" description="Loss of activity. Shows significantly reduced thermal stability." evidence="2">
    <original>D</original>
    <variation>A</variation>
    <location>
        <position position="41"/>
    </location>
</feature>
<feature type="mutagenesis site" description="Loss of activity. Shows significantly reduced thermal stability." evidence="2">
    <original>H</original>
    <variation>A</variation>
    <location>
        <position position="99"/>
    </location>
</feature>
<feature type="mutagenesis site" description="Loss of activity. Shows significantly reduced thermal stability." evidence="2">
    <original>D</original>
    <variation>A</variation>
    <location>
        <position position="102"/>
    </location>
</feature>
<feature type="mutagenesis site" description="Loss of activity. Shows significantly reduced thermal stability." evidence="2">
    <original>H</original>
    <variation>A</variation>
    <location>
        <position position="124"/>
    </location>
</feature>
<name>CAPLB_PSEJE</name>
<sequence length="581" mass="62736">MNTVDPITLAVVRGALETAQREMTLTLEKTSRSSVFNLAHDYSNALFDHLPEMILQGQDIPIHLGSLIPAMKCVAGFFGDEIAEGDVIYHNDPAYMGSHILDCCMYKPVFYKGELVFWTVCKGHLTDIGGPVPAGYNPDAKEIYAEGLRIPPVKLWAQGQRREDVINLLLTNMRARAYQEGDLNAQYGACSVGERHLIELLDRYGVDQVRACITELKDMADRHMRALLRDVPDGFYSGTAILEDSGHGLGELSITAQVEIRGDEAHVLIESPPQVPYFINSYAGNSISGVYLGLMMFAQVPPPYNEGLYRCVSVDLGPSGTLCNAQEPAPHVNCTTTPMETLADAVRLALEQAAPERVTASWGHASGINIAGHDPRNNNDEYVTMVLASVISGAGANKAMDGWPACGPLCCFGALMSGDIELLEYSYPVLIHRYSLMTDSGGAGEFRGGSGTRLELEPLKHAMTVVGFGEGRQLPTAGAAGAKNVLLEPKLGRLIHRHVDGEEDHYIQNTLLTAQPGERVINVNPGGGGYGDPLRRPLATVLADVRNGLVSIDGARLEYGVVIDGNGQLDEAATHAHRAAH</sequence>
<comment type="function">
    <text evidence="1 2">Component of a caprolactamase involved in the degradation of caprolactam, an industrial compound mainly used in the production of Nylon 6 (PubMed:29850960, PubMed:33826169). Catalyzes the ATP-dependent hydrolysis of the caprolactam ring to form 6-aminocaproic acid (6-ACA) (PubMed:29850960, PubMed:33826169). The beta subunit is responsible for hydrolytic lactam ring opening (PubMed:33826169). The enzyme cannot use 5-oxoproline (PubMed:29850960).</text>
</comment>
<comment type="cofactor">
    <cofactor evidence="5">
        <name>Zn(2+)</name>
        <dbReference type="ChEBI" id="CHEBI:29105"/>
    </cofactor>
    <text evidence="2">Binds 1 zinc ion per subunit.</text>
</comment>
<comment type="activity regulation">
    <text evidence="2">Activity is dependent on the presence of ATP and bicarbonate (PubMed:33826169). The requirement for bicarbonate may be related to allosteric activation through conformational effects, but it is also conceivable that carboxyphosphate is formed and acts as a mediator in caprolactam activation, forming carboxy- or phospholactim (PubMed:33826169).</text>
</comment>
<comment type="subunit">
    <text evidence="2">The caprolactamase is a heterotetramer composed of two alpha subunits (CapA) and two beta subunits (CapB).</text>
</comment>
<comment type="induction">
    <text evidence="1">Induced during growth on caprolactam.</text>
</comment>
<comment type="domain">
    <text evidence="2">The tetrameric structure and the presence of a connecting tunnel suggest that the activated lactim moves from the CapA active site to the CapB active site without release to solvent.</text>
</comment>
<comment type="similarity">
    <text evidence="4">Belongs to the HyuB family.</text>
</comment>
<accession>A0A2W0FH34</accession>
<reference key="1">
    <citation type="journal article" date="2018" name="Appl. Microbiol. Biotechnol.">
        <title>Characterization of the caprolactam degradation pathway in Pseudomonas jessenii using mass spectrometry-based proteomics.</title>
        <authorList>
            <person name="Otzen M."/>
            <person name="Palacio C."/>
            <person name="Janssen D.B."/>
        </authorList>
    </citation>
    <scope>NUCLEOTIDE SEQUENCE [LARGE SCALE GENOMIC DNA]</scope>
    <scope>FUNCTION AS A CAPROLACTAMASE</scope>
    <scope>INDUCTION</scope>
    <source>
        <strain>DSM 106008 / GO3</strain>
    </source>
</reference>
<reference evidence="7" key="2">
    <citation type="journal article" date="2021" name="Proteins">
        <title>Catalytic and structural properties of ATP-dependent caprolactamase from Pseudomonas jessenii.</title>
        <authorList>
            <person name="Marjanovic A."/>
            <person name="Rozeboom H.J."/>
            <person name="de Vries M.S."/>
            <person name="Mayer C."/>
            <person name="Otzen M."/>
            <person name="Wijma H.J."/>
            <person name="Janssen D.B."/>
        </authorList>
    </citation>
    <scope>X-RAY CRYSTALLOGRAPHY (4.00 ANGSTROMS)</scope>
    <scope>FUNCTION AS A CAPROLACTAMASE</scope>
    <scope>COFACTOR</scope>
    <scope>ACTIVITY REGULATION</scope>
    <scope>SUBUNIT</scope>
    <scope>DOMAIN</scope>
    <scope>MUTAGENESIS OF ASP-41; HIS-99; ASP-102 AND HIS-124</scope>
    <source>
        <strain>DSM 106008 / GO3</strain>
    </source>
</reference>
<protein>
    <recommendedName>
        <fullName evidence="3">Caprolactamase subunit beta</fullName>
        <ecNumber evidence="5">3.5.2.-</ecNumber>
    </recommendedName>
</protein>
<keyword id="KW-0002">3D-structure</keyword>
<keyword id="KW-0378">Hydrolase</keyword>
<keyword id="KW-0479">Metal-binding</keyword>
<keyword id="KW-0862">Zinc</keyword>
<organism>
    <name type="scientific">Pseudomonas jessenii</name>
    <dbReference type="NCBI Taxonomy" id="77298"/>
    <lineage>
        <taxon>Bacteria</taxon>
        <taxon>Pseudomonadati</taxon>
        <taxon>Pseudomonadota</taxon>
        <taxon>Gammaproteobacteria</taxon>
        <taxon>Pseudomonadales</taxon>
        <taxon>Pseudomonadaceae</taxon>
        <taxon>Pseudomonas</taxon>
    </lineage>
</organism>
<proteinExistence type="evidence at protein level"/>